<organism>
    <name type="scientific">Wigglesworthia glossinidia brevipalpis</name>
    <dbReference type="NCBI Taxonomy" id="36870"/>
    <lineage>
        <taxon>Bacteria</taxon>
        <taxon>Pseudomonadati</taxon>
        <taxon>Pseudomonadota</taxon>
        <taxon>Gammaproteobacteria</taxon>
        <taxon>Enterobacterales</taxon>
        <taxon>Erwiniaceae</taxon>
        <taxon>Wigglesworthia</taxon>
    </lineage>
</organism>
<accession>Q8D228</accession>
<dbReference type="EMBL" id="BA000021">
    <property type="protein sequence ID" value="BAC24673.1"/>
    <property type="molecule type" value="Genomic_DNA"/>
</dbReference>
<dbReference type="SMR" id="Q8D228"/>
<dbReference type="STRING" id="36870.gene:10369035"/>
<dbReference type="KEGG" id="wbr:htpG"/>
<dbReference type="eggNOG" id="COG0326">
    <property type="taxonomic scope" value="Bacteria"/>
</dbReference>
<dbReference type="HOGENOM" id="CLU_006684_3_0_6"/>
<dbReference type="OrthoDB" id="9802640at2"/>
<dbReference type="Proteomes" id="UP000000562">
    <property type="component" value="Chromosome"/>
</dbReference>
<dbReference type="GO" id="GO:0005737">
    <property type="term" value="C:cytoplasm"/>
    <property type="evidence" value="ECO:0007669"/>
    <property type="project" value="UniProtKB-SubCell"/>
</dbReference>
<dbReference type="GO" id="GO:0005524">
    <property type="term" value="F:ATP binding"/>
    <property type="evidence" value="ECO:0007669"/>
    <property type="project" value="UniProtKB-UniRule"/>
</dbReference>
<dbReference type="GO" id="GO:0016887">
    <property type="term" value="F:ATP hydrolysis activity"/>
    <property type="evidence" value="ECO:0007669"/>
    <property type="project" value="InterPro"/>
</dbReference>
<dbReference type="GO" id="GO:0140662">
    <property type="term" value="F:ATP-dependent protein folding chaperone"/>
    <property type="evidence" value="ECO:0007669"/>
    <property type="project" value="InterPro"/>
</dbReference>
<dbReference type="GO" id="GO:0051082">
    <property type="term" value="F:unfolded protein binding"/>
    <property type="evidence" value="ECO:0007669"/>
    <property type="project" value="UniProtKB-UniRule"/>
</dbReference>
<dbReference type="CDD" id="cd16927">
    <property type="entry name" value="HATPase_Hsp90-like"/>
    <property type="match status" value="1"/>
</dbReference>
<dbReference type="FunFam" id="3.30.230.80:FF:000002">
    <property type="entry name" value="Molecular chaperone HtpG"/>
    <property type="match status" value="1"/>
</dbReference>
<dbReference type="FunFam" id="3.30.565.10:FF:000009">
    <property type="entry name" value="Molecular chaperone HtpG"/>
    <property type="match status" value="1"/>
</dbReference>
<dbReference type="Gene3D" id="3.30.230.80">
    <property type="match status" value="1"/>
</dbReference>
<dbReference type="Gene3D" id="3.40.50.11260">
    <property type="match status" value="1"/>
</dbReference>
<dbReference type="Gene3D" id="1.20.120.790">
    <property type="entry name" value="Heat shock protein 90, C-terminal domain"/>
    <property type="match status" value="1"/>
</dbReference>
<dbReference type="Gene3D" id="3.30.565.10">
    <property type="entry name" value="Histidine kinase-like ATPase, C-terminal domain"/>
    <property type="match status" value="1"/>
</dbReference>
<dbReference type="HAMAP" id="MF_00505">
    <property type="entry name" value="HSP90"/>
    <property type="match status" value="1"/>
</dbReference>
<dbReference type="InterPro" id="IPR036890">
    <property type="entry name" value="HATPase_C_sf"/>
</dbReference>
<dbReference type="InterPro" id="IPR019805">
    <property type="entry name" value="Heat_shock_protein_90_CS"/>
</dbReference>
<dbReference type="InterPro" id="IPR037196">
    <property type="entry name" value="HSP90_C"/>
</dbReference>
<dbReference type="InterPro" id="IPR001404">
    <property type="entry name" value="Hsp90_fam"/>
</dbReference>
<dbReference type="InterPro" id="IPR020575">
    <property type="entry name" value="Hsp90_N"/>
</dbReference>
<dbReference type="InterPro" id="IPR020568">
    <property type="entry name" value="Ribosomal_Su5_D2-typ_SF"/>
</dbReference>
<dbReference type="NCBIfam" id="NF003555">
    <property type="entry name" value="PRK05218.1"/>
    <property type="match status" value="1"/>
</dbReference>
<dbReference type="PANTHER" id="PTHR11528">
    <property type="entry name" value="HEAT SHOCK PROTEIN 90 FAMILY MEMBER"/>
    <property type="match status" value="1"/>
</dbReference>
<dbReference type="Pfam" id="PF13589">
    <property type="entry name" value="HATPase_c_3"/>
    <property type="match status" value="1"/>
</dbReference>
<dbReference type="Pfam" id="PF00183">
    <property type="entry name" value="HSP90"/>
    <property type="match status" value="1"/>
</dbReference>
<dbReference type="PIRSF" id="PIRSF002583">
    <property type="entry name" value="Hsp90"/>
    <property type="match status" value="1"/>
</dbReference>
<dbReference type="PRINTS" id="PR00775">
    <property type="entry name" value="HEATSHOCK90"/>
</dbReference>
<dbReference type="SUPFAM" id="SSF55874">
    <property type="entry name" value="ATPase domain of HSP90 chaperone/DNA topoisomerase II/histidine kinase"/>
    <property type="match status" value="1"/>
</dbReference>
<dbReference type="SUPFAM" id="SSF110942">
    <property type="entry name" value="HSP90 C-terminal domain"/>
    <property type="match status" value="1"/>
</dbReference>
<dbReference type="SUPFAM" id="SSF54211">
    <property type="entry name" value="Ribosomal protein S5 domain 2-like"/>
    <property type="match status" value="1"/>
</dbReference>
<dbReference type="PROSITE" id="PS00298">
    <property type="entry name" value="HSP90"/>
    <property type="match status" value="1"/>
</dbReference>
<keyword id="KW-0067">ATP-binding</keyword>
<keyword id="KW-0143">Chaperone</keyword>
<keyword id="KW-0963">Cytoplasm</keyword>
<keyword id="KW-0547">Nucleotide-binding</keyword>
<keyword id="KW-1185">Reference proteome</keyword>
<keyword id="KW-0346">Stress response</keyword>
<reference key="1">
    <citation type="journal article" date="2002" name="Nat. Genet.">
        <title>Genome sequence of the endocellular obligate symbiont of tsetse flies, Wigglesworthia glossinidia.</title>
        <authorList>
            <person name="Akman L."/>
            <person name="Yamashita A."/>
            <person name="Watanabe H."/>
            <person name="Oshima K."/>
            <person name="Shiba T."/>
            <person name="Hattori M."/>
            <person name="Aksoy S."/>
        </authorList>
    </citation>
    <scope>NUCLEOTIDE SEQUENCE [LARGE SCALE GENOMIC DNA]</scope>
</reference>
<evidence type="ECO:0000255" key="1">
    <source>
        <dbReference type="HAMAP-Rule" id="MF_00505"/>
    </source>
</evidence>
<name>HTPG_WIGBR</name>
<comment type="function">
    <text evidence="1">Molecular chaperone. Has ATPase activity.</text>
</comment>
<comment type="subunit">
    <text evidence="1">Homodimer.</text>
</comment>
<comment type="subcellular location">
    <subcellularLocation>
        <location evidence="1">Cytoplasm</location>
    </subcellularLocation>
</comment>
<comment type="similarity">
    <text evidence="1">Belongs to the heat shock protein 90 family.</text>
</comment>
<feature type="chain" id="PRO_0000063024" description="Chaperone protein HtpG">
    <location>
        <begin position="1"/>
        <end position="638"/>
    </location>
</feature>
<feature type="region of interest" description="A; substrate-binding" evidence="1">
    <location>
        <begin position="1"/>
        <end position="344"/>
    </location>
</feature>
<feature type="region of interest" description="B" evidence="1">
    <location>
        <begin position="345"/>
        <end position="560"/>
    </location>
</feature>
<feature type="region of interest" description="C" evidence="1">
    <location>
        <begin position="561"/>
        <end position="638"/>
    </location>
</feature>
<protein>
    <recommendedName>
        <fullName evidence="1">Chaperone protein HtpG</fullName>
    </recommendedName>
    <alternativeName>
        <fullName evidence="1">Heat shock protein HtpG</fullName>
    </alternativeName>
    <alternativeName>
        <fullName evidence="1">High temperature protein G</fullName>
    </alternativeName>
</protein>
<gene>
    <name evidence="1" type="primary">htpG</name>
    <name type="ordered locus">WIGBR5270</name>
</gene>
<proteinExistence type="inferred from homology"/>
<sequence>MQKKETLEFQSEVKQLLNLMIHSLYSNKEIFLRELISNASDALDKLRFLSISDEKIKIKQNKLCIFIDYDKNKKSITIQDNGIGMSKKEVIENLGTIAKSGTKSFIKSIEKSNSEKNNQLIGKFGVGFYSVFIVSEKVLVLTRSFKENEKNGVLWESSGKGEYTISNIIKKDVGTEITIFLKESEKEFCDELNIKNIVLKYSNHINFPIKLKTKITKDNKILTPEEKKSYTWKQINTGKSLWSKKKSEIKDIEYKEFYKNFFNDNYDPLIWSHNHVEGKQEYVSLLYIPRKASWDIWNREHKHGLKLYVKKVFIMDQSSEFIPNYLRFIKGIIDSNDLPLNVSREILQNNENIYKIKINLTKKALLMLENLSKNHPDEYKLFWKEFGLILKEGPSEDIKNYENVIKLFRFSSTYINSENQEVSLEDYVKRMQSGQNKIFYITSDNYLSAKNNPHLEKLKEKKIEVLLLFDRIDEWMMNYMTEFKKIKFQSISKYSSYLENIFKDENNDQKNTEQKLSTIILRIKSYLKDRVKDVRFTSKLTNSPSTVTTDENDITTQMSKLLISTGQESPEIKYIFELNANHPIIKHVFNIEDKNIFNNWIELLFEESILSERGNLDDPNKFIHRINNLLLSNIIRLN</sequence>